<comment type="function">
    <text evidence="1">Probable L-fucose-binding lectin.</text>
</comment>
<comment type="subunit">
    <text evidence="1">Homodimer.</text>
</comment>
<comment type="subcellular location">
    <subcellularLocation>
        <location evidence="6">Secreted</location>
    </subcellularLocation>
</comment>
<comment type="domain">
    <text evidence="3">Adopts the six-bladed beta-propeller fold and contains six binding sites per monomer, each located between two adjacent blades (By similarity). The six binding sites that are non-equivalent, and owing to minor differences in amino-acid composition they exhibit a marked difference in specific ligand recognition (By similarity).</text>
</comment>
<comment type="similarity">
    <text evidence="7">Belongs to the fungal fucose-specific lectin family.</text>
</comment>
<evidence type="ECO:0000250" key="1">
    <source>
        <dbReference type="UniProtKB" id="P18891"/>
    </source>
</evidence>
<evidence type="ECO:0000250" key="2">
    <source>
        <dbReference type="UniProtKB" id="Q2UNX8"/>
    </source>
</evidence>
<evidence type="ECO:0000250" key="3">
    <source>
        <dbReference type="UniProtKB" id="Q4WW81"/>
    </source>
</evidence>
<evidence type="ECO:0000255" key="4"/>
<evidence type="ECO:0000255" key="5">
    <source>
        <dbReference type="PROSITE-ProRule" id="PRU00498"/>
    </source>
</evidence>
<evidence type="ECO:0000269" key="6">
    <source>
    </source>
</evidence>
<evidence type="ECO:0000305" key="7"/>
<keyword id="KW-0325">Glycoprotein</keyword>
<keyword id="KW-0430">Lectin</keyword>
<keyword id="KW-1185">Reference proteome</keyword>
<keyword id="KW-0677">Repeat</keyword>
<keyword id="KW-0964">Secreted</keyword>
<keyword id="KW-0732">Signal</keyword>
<accession>D4AL26</accession>
<dbReference type="EMBL" id="ABSU01000002">
    <property type="protein sequence ID" value="EFE36085.1"/>
    <property type="molecule type" value="Genomic_DNA"/>
</dbReference>
<dbReference type="RefSeq" id="XP_003016730.1">
    <property type="nucleotide sequence ID" value="XM_003016684.1"/>
</dbReference>
<dbReference type="SMR" id="D4AL26"/>
<dbReference type="STRING" id="663331.D4AL26"/>
<dbReference type="GeneID" id="9522215"/>
<dbReference type="KEGG" id="abe:ARB_05022"/>
<dbReference type="eggNOG" id="ENOG502SNJJ">
    <property type="taxonomic scope" value="Eukaryota"/>
</dbReference>
<dbReference type="HOGENOM" id="CLU_057373_0_0_1"/>
<dbReference type="OMA" id="VFNIRLY"/>
<dbReference type="Proteomes" id="UP000008866">
    <property type="component" value="Unassembled WGS sequence"/>
</dbReference>
<dbReference type="GO" id="GO:0005576">
    <property type="term" value="C:extracellular region"/>
    <property type="evidence" value="ECO:0007669"/>
    <property type="project" value="UniProtKB-SubCell"/>
</dbReference>
<dbReference type="GO" id="GO:0030246">
    <property type="term" value="F:carbohydrate binding"/>
    <property type="evidence" value="ECO:0007669"/>
    <property type="project" value="UniProtKB-KW"/>
</dbReference>
<dbReference type="Gene3D" id="2.120.10.70">
    <property type="entry name" value="Fucose-specific lectin"/>
    <property type="match status" value="1"/>
</dbReference>
<dbReference type="InterPro" id="IPR012475">
    <property type="entry name" value="Fungal_lectin"/>
</dbReference>
<dbReference type="Pfam" id="PF07938">
    <property type="entry name" value="Fungal_lectin"/>
    <property type="match status" value="1"/>
</dbReference>
<dbReference type="SUPFAM" id="SSF89372">
    <property type="entry name" value="Fucose-specific lectin"/>
    <property type="match status" value="1"/>
</dbReference>
<proteinExistence type="evidence at protein level"/>
<feature type="signal peptide" evidence="4">
    <location>
        <begin position="1"/>
        <end position="21"/>
    </location>
</feature>
<feature type="chain" id="PRO_5003054087" description="Fucose-specific lectin">
    <location>
        <begin position="22"/>
        <end position="365"/>
    </location>
</feature>
<feature type="repeat" description="1" evidence="7">
    <location>
        <begin position="22"/>
        <end position="79"/>
    </location>
</feature>
<feature type="repeat" description="2" evidence="7">
    <location>
        <begin position="80"/>
        <end position="141"/>
    </location>
</feature>
<feature type="repeat" description="3" evidence="7">
    <location>
        <begin position="142"/>
        <end position="206"/>
    </location>
</feature>
<feature type="repeat" description="4" evidence="7">
    <location>
        <begin position="207"/>
        <end position="261"/>
    </location>
</feature>
<feature type="repeat" description="5" evidence="7">
    <location>
        <begin position="262"/>
        <end position="309"/>
    </location>
</feature>
<feature type="repeat" description="6" evidence="7">
    <location>
        <begin position="310"/>
        <end position="365"/>
    </location>
</feature>
<feature type="region of interest" description="6 X approximate tandem repeats" evidence="7">
    <location>
        <begin position="22"/>
        <end position="365"/>
    </location>
</feature>
<feature type="binding site" evidence="2">
    <location>
        <position position="51"/>
    </location>
    <ligand>
        <name>beta-L-fucose</name>
        <dbReference type="ChEBI" id="CHEBI:42589"/>
        <label>1</label>
    </ligand>
</feature>
<feature type="binding site" evidence="2">
    <location>
        <position position="63"/>
    </location>
    <ligand>
        <name>beta-L-fucose</name>
        <dbReference type="ChEBI" id="CHEBI:42589"/>
        <label>1</label>
    </ligand>
</feature>
<feature type="binding site" evidence="2">
    <location>
        <position position="70"/>
    </location>
    <ligand>
        <name>beta-L-fucose</name>
        <dbReference type="ChEBI" id="CHEBI:42589"/>
        <label>6</label>
    </ligand>
</feature>
<feature type="binding site" evidence="2">
    <location>
        <position position="111"/>
    </location>
    <ligand>
        <name>beta-L-fucose</name>
        <dbReference type="ChEBI" id="CHEBI:42589"/>
        <label>2</label>
    </ligand>
</feature>
<feature type="binding site" evidence="2">
    <location>
        <position position="123"/>
    </location>
    <ligand>
        <name>beta-L-fucose</name>
        <dbReference type="ChEBI" id="CHEBI:42589"/>
        <label>2</label>
    </ligand>
</feature>
<feature type="binding site" evidence="2">
    <location>
        <position position="132"/>
    </location>
    <ligand>
        <name>beta-L-fucose</name>
        <dbReference type="ChEBI" id="CHEBI:42589"/>
        <label>1</label>
    </ligand>
</feature>
<feature type="binding site" evidence="2">
    <location>
        <position position="164"/>
    </location>
    <ligand>
        <name>beta-L-fucose</name>
        <dbReference type="ChEBI" id="CHEBI:42589"/>
        <label>3</label>
    </ligand>
</feature>
<feature type="binding site" evidence="2">
    <location>
        <position position="176"/>
    </location>
    <ligand>
        <name>beta-L-fucose</name>
        <dbReference type="ChEBI" id="CHEBI:42589"/>
        <label>3</label>
    </ligand>
</feature>
<feature type="binding site" evidence="2">
    <location>
        <position position="201"/>
    </location>
    <ligand>
        <name>beta-L-fucose</name>
        <dbReference type="ChEBI" id="CHEBI:42589"/>
        <label>2</label>
    </ligand>
</feature>
<feature type="binding site" evidence="2">
    <location>
        <position position="231"/>
    </location>
    <ligand>
        <name>beta-L-fucose</name>
        <dbReference type="ChEBI" id="CHEBI:42589"/>
        <label>4</label>
    </ligand>
</feature>
<feature type="binding site" evidence="2">
    <location>
        <position position="283"/>
    </location>
    <ligand>
        <name>beta-L-fucose</name>
        <dbReference type="ChEBI" id="CHEBI:42589"/>
        <label>5</label>
    </ligand>
</feature>
<feature type="binding site" evidence="2">
    <location>
        <position position="333"/>
    </location>
    <ligand>
        <name>beta-L-fucose</name>
        <dbReference type="ChEBI" id="CHEBI:42589"/>
        <label>6</label>
    </ligand>
</feature>
<feature type="binding site" evidence="2">
    <location>
        <position position="347"/>
    </location>
    <ligand>
        <name>beta-L-fucose</name>
        <dbReference type="ChEBI" id="CHEBI:42589"/>
        <label>6</label>
    </ligand>
</feature>
<feature type="glycosylation site" description="N-linked (GlcNAc...) asparagine" evidence="5">
    <location>
        <position position="26"/>
    </location>
</feature>
<feature type="glycosylation site" description="N-linked (GlcNAc...) asparagine" evidence="5">
    <location>
        <position position="76"/>
    </location>
</feature>
<feature type="glycosylation site" description="N-linked (GlcNAc...) asparagine" evidence="5">
    <location>
        <position position="85"/>
    </location>
</feature>
<feature type="glycosylation site" description="N-linked (GlcNAc...) asparagine" evidence="5">
    <location>
        <position position="118"/>
    </location>
</feature>
<feature type="glycosylation site" description="N-linked (GlcNAc...) asparagine" evidence="5">
    <location>
        <position position="248"/>
    </location>
</feature>
<name>LECF_ARTBC</name>
<organism>
    <name type="scientific">Arthroderma benhamiae (strain ATCC MYA-4681 / CBS 112371)</name>
    <name type="common">Trichophyton mentagrophytes</name>
    <dbReference type="NCBI Taxonomy" id="663331"/>
    <lineage>
        <taxon>Eukaryota</taxon>
        <taxon>Fungi</taxon>
        <taxon>Dikarya</taxon>
        <taxon>Ascomycota</taxon>
        <taxon>Pezizomycotina</taxon>
        <taxon>Eurotiomycetes</taxon>
        <taxon>Eurotiomycetidae</taxon>
        <taxon>Onygenales</taxon>
        <taxon>Arthrodermataceae</taxon>
        <taxon>Trichophyton</taxon>
    </lineage>
</organism>
<gene>
    <name type="ORF">ARB_05022</name>
</gene>
<protein>
    <recommendedName>
        <fullName evidence="1">Fucose-specific lectin</fullName>
    </recommendedName>
</protein>
<reference key="1">
    <citation type="journal article" date="2011" name="Genome Biol.">
        <title>Comparative and functional genomics provide insights into the pathogenicity of dermatophytic fungi.</title>
        <authorList>
            <person name="Burmester A."/>
            <person name="Shelest E."/>
            <person name="Gloeckner G."/>
            <person name="Heddergott C."/>
            <person name="Schindler S."/>
            <person name="Staib P."/>
            <person name="Heidel A."/>
            <person name="Felder M."/>
            <person name="Petzold A."/>
            <person name="Szafranski K."/>
            <person name="Feuermann M."/>
            <person name="Pedruzzi I."/>
            <person name="Priebe S."/>
            <person name="Groth M."/>
            <person name="Winkler R."/>
            <person name="Li W."/>
            <person name="Kniemeyer O."/>
            <person name="Schroeckh V."/>
            <person name="Hertweck C."/>
            <person name="Hube B."/>
            <person name="White T.C."/>
            <person name="Platzer M."/>
            <person name="Guthke R."/>
            <person name="Heitman J."/>
            <person name="Woestemeyer J."/>
            <person name="Zipfel P.F."/>
            <person name="Monod M."/>
            <person name="Brakhage A.A."/>
        </authorList>
    </citation>
    <scope>NUCLEOTIDE SEQUENCE [LARGE SCALE GENOMIC DNA]</scope>
    <source>
        <strain>ATCC MYA-4681 / CBS 112371</strain>
    </source>
</reference>
<reference key="2">
    <citation type="journal article" date="2011" name="Proteomics">
        <title>Identification of novel secreted proteases during extracellular proteolysis by dermatophytes at acidic pH.</title>
        <authorList>
            <person name="Sriranganadane D."/>
            <person name="Waridel P."/>
            <person name="Salamin K."/>
            <person name="Feuermann M."/>
            <person name="Mignon B."/>
            <person name="Staib P."/>
            <person name="Neuhaus J.M."/>
            <person name="Quadroni M."/>
            <person name="Monod M."/>
        </authorList>
    </citation>
    <scope>IDENTIFICATION BY MASS SPECTROMETRY</scope>
    <scope>SUBCELLULAR LOCATION</scope>
</reference>
<sequence length="365" mass="40297">MKLLHFTILLQVSLFPASSLAQAGGNNTEVQVQQTLPGTGIAAVNSVNLLRIYSQDTSGGIREARFEGYWSGGLANDTIAKARANSSIAAASDDLELYKSSSSTNFLLKIRVYYLLPNNTLGEAASDSQSRWYTGSLNQYNFQVASHSRLAAVFVPSTQRPRLRIYAQLGDNTIQEFGYDVSPLSQLEPMFANYLKVGRGWQRLANFGPALPGTGIAALTYTTGLRRSTTRVYFQTTDRRVVERVYDNRSWSDGGTVVRTAKPRTPLAATSFLLTPGNPQSVRVYYGTEDNRILEKGTEGGTYWYDGAFEHSAIPDSQVAAVDWGNGGVFNIRLYIQDGAFKNGISEWAWFRRSWRRGILAIPPA</sequence>